<gene>
    <name type="primary">OR2M5</name>
    <name type="synonym">OR2M5P</name>
</gene>
<feature type="chain" id="PRO_0000293719" description="Olfactory receptor 2M5">
    <location>
        <begin position="1"/>
        <end position="312"/>
    </location>
</feature>
<feature type="topological domain" description="Extracellular" evidence="1">
    <location>
        <begin position="1"/>
        <end position="25"/>
    </location>
</feature>
<feature type="transmembrane region" description="Helical; Name=1" evidence="1">
    <location>
        <begin position="26"/>
        <end position="49"/>
    </location>
</feature>
<feature type="topological domain" description="Cytoplasmic" evidence="1">
    <location>
        <begin position="50"/>
        <end position="57"/>
    </location>
</feature>
<feature type="transmembrane region" description="Helical; Name=2" evidence="1">
    <location>
        <begin position="58"/>
        <end position="79"/>
    </location>
</feature>
<feature type="topological domain" description="Extracellular" evidence="1">
    <location>
        <begin position="80"/>
        <end position="100"/>
    </location>
</feature>
<feature type="transmembrane region" description="Helical; Name=3" evidence="1">
    <location>
        <begin position="101"/>
        <end position="120"/>
    </location>
</feature>
<feature type="topological domain" description="Cytoplasmic" evidence="1">
    <location>
        <begin position="121"/>
        <end position="139"/>
    </location>
</feature>
<feature type="transmembrane region" description="Helical; Name=4" evidence="1">
    <location>
        <begin position="140"/>
        <end position="158"/>
    </location>
</feature>
<feature type="topological domain" description="Extracellular" evidence="1">
    <location>
        <begin position="159"/>
        <end position="195"/>
    </location>
</feature>
<feature type="transmembrane region" description="Helical; Name=5" evidence="1">
    <location>
        <begin position="196"/>
        <end position="219"/>
    </location>
</feature>
<feature type="topological domain" description="Cytoplasmic" evidence="1">
    <location>
        <begin position="220"/>
        <end position="236"/>
    </location>
</feature>
<feature type="transmembrane region" description="Helical; Name=6" evidence="1">
    <location>
        <begin position="237"/>
        <end position="259"/>
    </location>
</feature>
<feature type="topological domain" description="Extracellular" evidence="1">
    <location>
        <begin position="260"/>
        <end position="272"/>
    </location>
</feature>
<feature type="transmembrane region" description="Helical; Name=7" evidence="1">
    <location>
        <begin position="273"/>
        <end position="292"/>
    </location>
</feature>
<feature type="topological domain" description="Cytoplasmic" evidence="1">
    <location>
        <begin position="293"/>
        <end position="311"/>
    </location>
</feature>
<feature type="glycosylation site" description="N-linked (GlcNAc...) asparagine" evidence="1">
    <location>
        <position position="5"/>
    </location>
</feature>
<feature type="disulfide bond" evidence="2">
    <location>
        <begin position="97"/>
        <end position="189"/>
    </location>
</feature>
<feature type="sequence variant" id="VAR_064739" description="Found in a renal cell carcinoma sample; somatic mutation." evidence="3">
    <original>H</original>
    <variation>N</variation>
    <location>
        <position position="244"/>
    </location>
</feature>
<reference key="1">
    <citation type="journal article" date="2006" name="Nature">
        <title>The DNA sequence and biological annotation of human chromosome 1.</title>
        <authorList>
            <person name="Gregory S.G."/>
            <person name="Barlow K.F."/>
            <person name="McLay K.E."/>
            <person name="Kaul R."/>
            <person name="Swarbreck D."/>
            <person name="Dunham A."/>
            <person name="Scott C.E."/>
            <person name="Howe K.L."/>
            <person name="Woodfine K."/>
            <person name="Spencer C.C.A."/>
            <person name="Jones M.C."/>
            <person name="Gillson C."/>
            <person name="Searle S."/>
            <person name="Zhou Y."/>
            <person name="Kokocinski F."/>
            <person name="McDonald L."/>
            <person name="Evans R."/>
            <person name="Phillips K."/>
            <person name="Atkinson A."/>
            <person name="Cooper R."/>
            <person name="Jones C."/>
            <person name="Hall R.E."/>
            <person name="Andrews T.D."/>
            <person name="Lloyd C."/>
            <person name="Ainscough R."/>
            <person name="Almeida J.P."/>
            <person name="Ambrose K.D."/>
            <person name="Anderson F."/>
            <person name="Andrew R.W."/>
            <person name="Ashwell R.I.S."/>
            <person name="Aubin K."/>
            <person name="Babbage A.K."/>
            <person name="Bagguley C.L."/>
            <person name="Bailey J."/>
            <person name="Beasley H."/>
            <person name="Bethel G."/>
            <person name="Bird C.P."/>
            <person name="Bray-Allen S."/>
            <person name="Brown J.Y."/>
            <person name="Brown A.J."/>
            <person name="Buckley D."/>
            <person name="Burton J."/>
            <person name="Bye J."/>
            <person name="Carder C."/>
            <person name="Chapman J.C."/>
            <person name="Clark S.Y."/>
            <person name="Clarke G."/>
            <person name="Clee C."/>
            <person name="Cobley V."/>
            <person name="Collier R.E."/>
            <person name="Corby N."/>
            <person name="Coville G.J."/>
            <person name="Davies J."/>
            <person name="Deadman R."/>
            <person name="Dunn M."/>
            <person name="Earthrowl M."/>
            <person name="Ellington A.G."/>
            <person name="Errington H."/>
            <person name="Frankish A."/>
            <person name="Frankland J."/>
            <person name="French L."/>
            <person name="Garner P."/>
            <person name="Garnett J."/>
            <person name="Gay L."/>
            <person name="Ghori M.R.J."/>
            <person name="Gibson R."/>
            <person name="Gilby L.M."/>
            <person name="Gillett W."/>
            <person name="Glithero R.J."/>
            <person name="Grafham D.V."/>
            <person name="Griffiths C."/>
            <person name="Griffiths-Jones S."/>
            <person name="Grocock R."/>
            <person name="Hammond S."/>
            <person name="Harrison E.S.I."/>
            <person name="Hart E."/>
            <person name="Haugen E."/>
            <person name="Heath P.D."/>
            <person name="Holmes S."/>
            <person name="Holt K."/>
            <person name="Howden P.J."/>
            <person name="Hunt A.R."/>
            <person name="Hunt S.E."/>
            <person name="Hunter G."/>
            <person name="Isherwood J."/>
            <person name="James R."/>
            <person name="Johnson C."/>
            <person name="Johnson D."/>
            <person name="Joy A."/>
            <person name="Kay M."/>
            <person name="Kershaw J.K."/>
            <person name="Kibukawa M."/>
            <person name="Kimberley A.M."/>
            <person name="King A."/>
            <person name="Knights A.J."/>
            <person name="Lad H."/>
            <person name="Laird G."/>
            <person name="Lawlor S."/>
            <person name="Leongamornlert D.A."/>
            <person name="Lloyd D.M."/>
            <person name="Loveland J."/>
            <person name="Lovell J."/>
            <person name="Lush M.J."/>
            <person name="Lyne R."/>
            <person name="Martin S."/>
            <person name="Mashreghi-Mohammadi M."/>
            <person name="Matthews L."/>
            <person name="Matthews N.S.W."/>
            <person name="McLaren S."/>
            <person name="Milne S."/>
            <person name="Mistry S."/>
            <person name="Moore M.J.F."/>
            <person name="Nickerson T."/>
            <person name="O'Dell C.N."/>
            <person name="Oliver K."/>
            <person name="Palmeiri A."/>
            <person name="Palmer S.A."/>
            <person name="Parker A."/>
            <person name="Patel D."/>
            <person name="Pearce A.V."/>
            <person name="Peck A.I."/>
            <person name="Pelan S."/>
            <person name="Phelps K."/>
            <person name="Phillimore B.J."/>
            <person name="Plumb R."/>
            <person name="Rajan J."/>
            <person name="Raymond C."/>
            <person name="Rouse G."/>
            <person name="Saenphimmachak C."/>
            <person name="Sehra H.K."/>
            <person name="Sheridan E."/>
            <person name="Shownkeen R."/>
            <person name="Sims S."/>
            <person name="Skuce C.D."/>
            <person name="Smith M."/>
            <person name="Steward C."/>
            <person name="Subramanian S."/>
            <person name="Sycamore N."/>
            <person name="Tracey A."/>
            <person name="Tromans A."/>
            <person name="Van Helmond Z."/>
            <person name="Wall M."/>
            <person name="Wallis J.M."/>
            <person name="White S."/>
            <person name="Whitehead S.L."/>
            <person name="Wilkinson J.E."/>
            <person name="Willey D.L."/>
            <person name="Williams H."/>
            <person name="Wilming L."/>
            <person name="Wray P.W."/>
            <person name="Wu Z."/>
            <person name="Coulson A."/>
            <person name="Vaudin M."/>
            <person name="Sulston J.E."/>
            <person name="Durbin R.M."/>
            <person name="Hubbard T."/>
            <person name="Wooster R."/>
            <person name="Dunham I."/>
            <person name="Carter N.P."/>
            <person name="McVean G."/>
            <person name="Ross M.T."/>
            <person name="Harrow J."/>
            <person name="Olson M.V."/>
            <person name="Beck S."/>
            <person name="Rogers J."/>
            <person name="Bentley D.R."/>
        </authorList>
    </citation>
    <scope>NUCLEOTIDE SEQUENCE [LARGE SCALE GENOMIC DNA]</scope>
</reference>
<reference key="2">
    <citation type="journal article" date="2011" name="Nature">
        <title>Exome sequencing identifies frequent mutation of the SWI/SNF complex gene PBRM1 in renal carcinoma.</title>
        <authorList>
            <person name="Varela I."/>
            <person name="Tarpey P."/>
            <person name="Raine K."/>
            <person name="Huang D."/>
            <person name="Ong C.K."/>
            <person name="Stephens P."/>
            <person name="Davies H."/>
            <person name="Jones D."/>
            <person name="Lin M.L."/>
            <person name="Teague J."/>
            <person name="Bignell G."/>
            <person name="Butler A."/>
            <person name="Cho J."/>
            <person name="Dalgliesh G.L."/>
            <person name="Galappaththige D."/>
            <person name="Greenman C."/>
            <person name="Hardy C."/>
            <person name="Jia M."/>
            <person name="Latimer C."/>
            <person name="Lau K.W."/>
            <person name="Marshall J."/>
            <person name="McLaren S."/>
            <person name="Menzies A."/>
            <person name="Mudie L."/>
            <person name="Stebbings L."/>
            <person name="Largaespada D.A."/>
            <person name="Wessels L.F.A."/>
            <person name="Richard S."/>
            <person name="Kahnoski R.J."/>
            <person name="Anema J."/>
            <person name="Tuveson D.A."/>
            <person name="Perez-Mancera P.A."/>
            <person name="Mustonen V."/>
            <person name="Fischer A."/>
            <person name="Adams D.J."/>
            <person name="Rust A."/>
            <person name="Chan-On W."/>
            <person name="Subimerb C."/>
            <person name="Dykema K."/>
            <person name="Furge K."/>
            <person name="Campbell P.J."/>
            <person name="Teh B.T."/>
            <person name="Stratton M.R."/>
            <person name="Futreal P.A."/>
        </authorList>
    </citation>
    <scope>VARIANT ASN-244</scope>
</reference>
<comment type="function">
    <text evidence="4">Odorant receptor.</text>
</comment>
<comment type="subcellular location">
    <subcellularLocation>
        <location>Cell membrane</location>
        <topology>Multi-pass membrane protein</topology>
    </subcellularLocation>
</comment>
<comment type="similarity">
    <text evidence="2">Belongs to the G-protein coupled receptor 1 family.</text>
</comment>
<comment type="online information" name="Human Olfactory Receptor Data Exploratorium (HORDE)">
    <link uri="http://genome.weizmann.ac.il/horde/card/index/symbol:OR2M5"/>
</comment>
<organism>
    <name type="scientific">Homo sapiens</name>
    <name type="common">Human</name>
    <dbReference type="NCBI Taxonomy" id="9606"/>
    <lineage>
        <taxon>Eukaryota</taxon>
        <taxon>Metazoa</taxon>
        <taxon>Chordata</taxon>
        <taxon>Craniata</taxon>
        <taxon>Vertebrata</taxon>
        <taxon>Euteleostomi</taxon>
        <taxon>Mammalia</taxon>
        <taxon>Eutheria</taxon>
        <taxon>Euarchontoglires</taxon>
        <taxon>Primates</taxon>
        <taxon>Haplorrhini</taxon>
        <taxon>Catarrhini</taxon>
        <taxon>Hominidae</taxon>
        <taxon>Homo</taxon>
    </lineage>
</organism>
<sequence>MAWENQTFNSDFILLGIFNHSPTHTFLFFLVLAIFSVAFMGNSVMVLLIYLDTQLHTPMYFLLSQLFLMDLMLICSTVPKMAFNYLSGSKSISMAGCATQIFFYVSLLGSECFLLAVMSYDRYIAICHPLRYTNLMRPKICGLMTAFSWILGSMDAIIDAVATFSFSYCGSREIAHFFCDFPSLLILSCNDTSIFEKVLFICCIVMIVFPVAIIIASYARVILAVIHMGSGEGRRKAFTTCSSHLMVVGMYYGAGLFMYIRPTSDRSPMQDKLVSVFYTILTPMLNPLIYSLRNKEVTRALRKVLGKGKCGE</sequence>
<dbReference type="EMBL" id="AL592313">
    <property type="status" value="NOT_ANNOTATED_CDS"/>
    <property type="molecule type" value="Genomic_DNA"/>
</dbReference>
<dbReference type="CCDS" id="CCDS31105.1"/>
<dbReference type="RefSeq" id="NP_001004690.1">
    <property type="nucleotide sequence ID" value="NM_001004690.1"/>
</dbReference>
<dbReference type="SMR" id="A3KFT3"/>
<dbReference type="FunCoup" id="A3KFT3">
    <property type="interactions" value="455"/>
</dbReference>
<dbReference type="STRING" id="9606.ENSP00000355432"/>
<dbReference type="GlyCosmos" id="A3KFT3">
    <property type="glycosylation" value="1 site, No reported glycans"/>
</dbReference>
<dbReference type="GlyGen" id="A3KFT3">
    <property type="glycosylation" value="1 site"/>
</dbReference>
<dbReference type="BioMuta" id="OR2M5"/>
<dbReference type="MassIVE" id="A3KFT3"/>
<dbReference type="PaxDb" id="9606-ENSP00000355432"/>
<dbReference type="Antibodypedia" id="34745">
    <property type="antibodies" value="31 antibodies from 9 providers"/>
</dbReference>
<dbReference type="DNASU" id="127059"/>
<dbReference type="Ensembl" id="ENST00000366476.1">
    <property type="protein sequence ID" value="ENSP00000355432.1"/>
    <property type="gene ID" value="ENSG00000162727.3"/>
</dbReference>
<dbReference type="GeneID" id="127059"/>
<dbReference type="KEGG" id="hsa:127059"/>
<dbReference type="MANE-Select" id="ENST00000366476.1">
    <property type="protein sequence ID" value="ENSP00000355432.1"/>
    <property type="RefSeq nucleotide sequence ID" value="NM_001004690.1"/>
    <property type="RefSeq protein sequence ID" value="NP_001004690.1"/>
</dbReference>
<dbReference type="UCSC" id="uc010pze.2">
    <property type="organism name" value="human"/>
</dbReference>
<dbReference type="AGR" id="HGNC:19576"/>
<dbReference type="CTD" id="127059"/>
<dbReference type="GeneCards" id="OR2M5"/>
<dbReference type="HGNC" id="HGNC:19576">
    <property type="gene designation" value="OR2M5"/>
</dbReference>
<dbReference type="HPA" id="ENSG00000162727">
    <property type="expression patterns" value="Not detected"/>
</dbReference>
<dbReference type="neXtProt" id="NX_A3KFT3"/>
<dbReference type="PharmGKB" id="PA134871998"/>
<dbReference type="VEuPathDB" id="HostDB:ENSG00000162727"/>
<dbReference type="eggNOG" id="ENOG502SHXQ">
    <property type="taxonomic scope" value="Eukaryota"/>
</dbReference>
<dbReference type="GeneTree" id="ENSGT01130000278260"/>
<dbReference type="HOGENOM" id="CLU_012526_1_2_1"/>
<dbReference type="InParanoid" id="A3KFT3"/>
<dbReference type="OMA" id="WILGSMD"/>
<dbReference type="OrthoDB" id="9831471at2759"/>
<dbReference type="PAN-GO" id="A3KFT3">
    <property type="GO annotations" value="0 GO annotations based on evolutionary models"/>
</dbReference>
<dbReference type="PhylomeDB" id="A3KFT3"/>
<dbReference type="TreeFam" id="TF337295"/>
<dbReference type="PathwayCommons" id="A3KFT3"/>
<dbReference type="Reactome" id="R-HSA-9752946">
    <property type="pathway name" value="Expression and translocation of olfactory receptors"/>
</dbReference>
<dbReference type="SignaLink" id="A3KFT3"/>
<dbReference type="BioGRID-ORCS" id="127059">
    <property type="hits" value="9 hits in 690 CRISPR screens"/>
</dbReference>
<dbReference type="GenomeRNAi" id="127059"/>
<dbReference type="Pharos" id="A3KFT3">
    <property type="development level" value="Tdark"/>
</dbReference>
<dbReference type="PRO" id="PR:A3KFT3"/>
<dbReference type="Proteomes" id="UP000005640">
    <property type="component" value="Chromosome 1"/>
</dbReference>
<dbReference type="RNAct" id="A3KFT3">
    <property type="molecule type" value="protein"/>
</dbReference>
<dbReference type="Bgee" id="ENSG00000162727">
    <property type="expression patterns" value="Expressed in male germ line stem cell (sensu Vertebrata) in testis"/>
</dbReference>
<dbReference type="GO" id="GO:0005886">
    <property type="term" value="C:plasma membrane"/>
    <property type="evidence" value="ECO:0000318"/>
    <property type="project" value="GO_Central"/>
</dbReference>
<dbReference type="GO" id="GO:0004930">
    <property type="term" value="F:G protein-coupled receptor activity"/>
    <property type="evidence" value="ECO:0007669"/>
    <property type="project" value="UniProtKB-KW"/>
</dbReference>
<dbReference type="GO" id="GO:0004984">
    <property type="term" value="F:olfactory receptor activity"/>
    <property type="evidence" value="ECO:0000318"/>
    <property type="project" value="GO_Central"/>
</dbReference>
<dbReference type="GO" id="GO:0050911">
    <property type="term" value="P:detection of chemical stimulus involved in sensory perception of smell"/>
    <property type="evidence" value="ECO:0000318"/>
    <property type="project" value="GO_Central"/>
</dbReference>
<dbReference type="CDD" id="cd15421">
    <property type="entry name" value="7tmA_OR2T-like"/>
    <property type="match status" value="1"/>
</dbReference>
<dbReference type="FunFam" id="1.10.1220.70:FF:000001">
    <property type="entry name" value="Olfactory receptor"/>
    <property type="match status" value="1"/>
</dbReference>
<dbReference type="FunFam" id="1.20.1070.10:FF:000008">
    <property type="entry name" value="Olfactory receptor"/>
    <property type="match status" value="1"/>
</dbReference>
<dbReference type="Gene3D" id="1.20.1070.10">
    <property type="entry name" value="Rhodopsin 7-helix transmembrane proteins"/>
    <property type="match status" value="1"/>
</dbReference>
<dbReference type="InterPro" id="IPR000276">
    <property type="entry name" value="GPCR_Rhodpsn"/>
</dbReference>
<dbReference type="InterPro" id="IPR017452">
    <property type="entry name" value="GPCR_Rhodpsn_7TM"/>
</dbReference>
<dbReference type="InterPro" id="IPR000725">
    <property type="entry name" value="Olfact_rcpt"/>
</dbReference>
<dbReference type="PANTHER" id="PTHR26453">
    <property type="entry name" value="OLFACTORY RECEPTOR"/>
    <property type="match status" value="1"/>
</dbReference>
<dbReference type="Pfam" id="PF13853">
    <property type="entry name" value="7tm_4"/>
    <property type="match status" value="1"/>
</dbReference>
<dbReference type="PRINTS" id="PR00237">
    <property type="entry name" value="GPCRRHODOPSN"/>
</dbReference>
<dbReference type="PRINTS" id="PR00245">
    <property type="entry name" value="OLFACTORYR"/>
</dbReference>
<dbReference type="SUPFAM" id="SSF81321">
    <property type="entry name" value="Family A G protein-coupled receptor-like"/>
    <property type="match status" value="1"/>
</dbReference>
<dbReference type="PROSITE" id="PS00237">
    <property type="entry name" value="G_PROTEIN_RECEP_F1_1"/>
    <property type="match status" value="1"/>
</dbReference>
<dbReference type="PROSITE" id="PS50262">
    <property type="entry name" value="G_PROTEIN_RECEP_F1_2"/>
    <property type="match status" value="1"/>
</dbReference>
<evidence type="ECO:0000255" key="1"/>
<evidence type="ECO:0000255" key="2">
    <source>
        <dbReference type="PROSITE-ProRule" id="PRU00521"/>
    </source>
</evidence>
<evidence type="ECO:0000269" key="3">
    <source>
    </source>
</evidence>
<evidence type="ECO:0000305" key="4"/>
<proteinExistence type="inferred from homology"/>
<accession>A3KFT3</accession>
<protein>
    <recommendedName>
        <fullName>Olfactory receptor 2M5</fullName>
    </recommendedName>
</protein>
<keyword id="KW-1003">Cell membrane</keyword>
<keyword id="KW-1015">Disulfide bond</keyword>
<keyword id="KW-0297">G-protein coupled receptor</keyword>
<keyword id="KW-0325">Glycoprotein</keyword>
<keyword id="KW-0472">Membrane</keyword>
<keyword id="KW-0552">Olfaction</keyword>
<keyword id="KW-0675">Receptor</keyword>
<keyword id="KW-1185">Reference proteome</keyword>
<keyword id="KW-0716">Sensory transduction</keyword>
<keyword id="KW-0807">Transducer</keyword>
<keyword id="KW-0812">Transmembrane</keyword>
<keyword id="KW-1133">Transmembrane helix</keyword>
<name>OR2M5_HUMAN</name>